<dbReference type="EMBL" id="CP000438">
    <property type="protein sequence ID" value="ABJ13520.1"/>
    <property type="molecule type" value="Genomic_DNA"/>
</dbReference>
<dbReference type="RefSeq" id="WP_003093700.1">
    <property type="nucleotide sequence ID" value="NZ_CP034244.1"/>
</dbReference>
<dbReference type="SMR" id="Q02T66"/>
<dbReference type="GeneID" id="77219212"/>
<dbReference type="KEGG" id="pau:PA14_08990"/>
<dbReference type="PseudoCAP" id="PA14_08990"/>
<dbReference type="HOGENOM" id="CLU_098428_0_0_6"/>
<dbReference type="BioCyc" id="PAER208963:G1G74-750-MONOMER"/>
<dbReference type="Proteomes" id="UP000000653">
    <property type="component" value="Chromosome"/>
</dbReference>
<dbReference type="GO" id="GO:1990904">
    <property type="term" value="C:ribonucleoprotein complex"/>
    <property type="evidence" value="ECO:0007669"/>
    <property type="project" value="UniProtKB-KW"/>
</dbReference>
<dbReference type="GO" id="GO:0005840">
    <property type="term" value="C:ribosome"/>
    <property type="evidence" value="ECO:0007669"/>
    <property type="project" value="UniProtKB-KW"/>
</dbReference>
<dbReference type="GO" id="GO:0019843">
    <property type="term" value="F:rRNA binding"/>
    <property type="evidence" value="ECO:0007669"/>
    <property type="project" value="UniProtKB-UniRule"/>
</dbReference>
<dbReference type="GO" id="GO:0003735">
    <property type="term" value="F:structural constituent of ribosome"/>
    <property type="evidence" value="ECO:0007669"/>
    <property type="project" value="InterPro"/>
</dbReference>
<dbReference type="GO" id="GO:0006412">
    <property type="term" value="P:translation"/>
    <property type="evidence" value="ECO:0007669"/>
    <property type="project" value="UniProtKB-UniRule"/>
</dbReference>
<dbReference type="FunFam" id="3.30.1370.30:FF:000003">
    <property type="entry name" value="30S ribosomal protein S8"/>
    <property type="match status" value="1"/>
</dbReference>
<dbReference type="FunFam" id="3.30.1490.10:FF:000001">
    <property type="entry name" value="30S ribosomal protein S8"/>
    <property type="match status" value="1"/>
</dbReference>
<dbReference type="Gene3D" id="3.30.1370.30">
    <property type="match status" value="1"/>
</dbReference>
<dbReference type="Gene3D" id="3.30.1490.10">
    <property type="match status" value="1"/>
</dbReference>
<dbReference type="HAMAP" id="MF_01302_B">
    <property type="entry name" value="Ribosomal_uS8_B"/>
    <property type="match status" value="1"/>
</dbReference>
<dbReference type="InterPro" id="IPR000630">
    <property type="entry name" value="Ribosomal_uS8"/>
</dbReference>
<dbReference type="InterPro" id="IPR047863">
    <property type="entry name" value="Ribosomal_uS8_CS"/>
</dbReference>
<dbReference type="InterPro" id="IPR035987">
    <property type="entry name" value="Ribosomal_uS8_sf"/>
</dbReference>
<dbReference type="NCBIfam" id="NF001109">
    <property type="entry name" value="PRK00136.1"/>
    <property type="match status" value="1"/>
</dbReference>
<dbReference type="PANTHER" id="PTHR11758">
    <property type="entry name" value="40S RIBOSOMAL PROTEIN S15A"/>
    <property type="match status" value="1"/>
</dbReference>
<dbReference type="Pfam" id="PF00410">
    <property type="entry name" value="Ribosomal_S8"/>
    <property type="match status" value="1"/>
</dbReference>
<dbReference type="SUPFAM" id="SSF56047">
    <property type="entry name" value="Ribosomal protein S8"/>
    <property type="match status" value="1"/>
</dbReference>
<dbReference type="PROSITE" id="PS00053">
    <property type="entry name" value="RIBOSOMAL_S8"/>
    <property type="match status" value="1"/>
</dbReference>
<accession>Q02T66</accession>
<feature type="chain" id="PRO_0000290904" description="Small ribosomal subunit protein uS8">
    <location>
        <begin position="1"/>
        <end position="130"/>
    </location>
</feature>
<keyword id="KW-0687">Ribonucleoprotein</keyword>
<keyword id="KW-0689">Ribosomal protein</keyword>
<keyword id="KW-0694">RNA-binding</keyword>
<keyword id="KW-0699">rRNA-binding</keyword>
<protein>
    <recommendedName>
        <fullName evidence="1">Small ribosomal subunit protein uS8</fullName>
    </recommendedName>
    <alternativeName>
        <fullName evidence="2">30S ribosomal protein S8</fullName>
    </alternativeName>
</protein>
<reference key="1">
    <citation type="journal article" date="2006" name="Genome Biol.">
        <title>Genomic analysis reveals that Pseudomonas aeruginosa virulence is combinatorial.</title>
        <authorList>
            <person name="Lee D.G."/>
            <person name="Urbach J.M."/>
            <person name="Wu G."/>
            <person name="Liberati N.T."/>
            <person name="Feinbaum R.L."/>
            <person name="Miyata S."/>
            <person name="Diggins L.T."/>
            <person name="He J."/>
            <person name="Saucier M."/>
            <person name="Deziel E."/>
            <person name="Friedman L."/>
            <person name="Li L."/>
            <person name="Grills G."/>
            <person name="Montgomery K."/>
            <person name="Kucherlapati R."/>
            <person name="Rahme L.G."/>
            <person name="Ausubel F.M."/>
        </authorList>
    </citation>
    <scope>NUCLEOTIDE SEQUENCE [LARGE SCALE GENOMIC DNA]</scope>
    <source>
        <strain>UCBPP-PA14</strain>
    </source>
</reference>
<sequence length="130" mass="14171">MSMQDPLADMLTRIRNAQMAEKTVVSMPSSKLKAAVAKVLKDEGYIADFQISSEVKPQLSIELKYFEGKPVIEEVKRISRPGLRQYKSVEQLPKVRGGLGVSIVSTNKGVMTDRAARAAGVGGEVLCTVF</sequence>
<gene>
    <name evidence="1" type="primary">rpsH</name>
    <name type="ordered locus">PA14_08990</name>
</gene>
<organism>
    <name type="scientific">Pseudomonas aeruginosa (strain UCBPP-PA14)</name>
    <dbReference type="NCBI Taxonomy" id="208963"/>
    <lineage>
        <taxon>Bacteria</taxon>
        <taxon>Pseudomonadati</taxon>
        <taxon>Pseudomonadota</taxon>
        <taxon>Gammaproteobacteria</taxon>
        <taxon>Pseudomonadales</taxon>
        <taxon>Pseudomonadaceae</taxon>
        <taxon>Pseudomonas</taxon>
    </lineage>
</organism>
<name>RS8_PSEAB</name>
<proteinExistence type="inferred from homology"/>
<evidence type="ECO:0000255" key="1">
    <source>
        <dbReference type="HAMAP-Rule" id="MF_01302"/>
    </source>
</evidence>
<evidence type="ECO:0000305" key="2"/>
<comment type="function">
    <text evidence="1">One of the primary rRNA binding proteins, it binds directly to 16S rRNA central domain where it helps coordinate assembly of the platform of the 30S subunit.</text>
</comment>
<comment type="subunit">
    <text evidence="1">Part of the 30S ribosomal subunit. Contacts proteins S5 and S12.</text>
</comment>
<comment type="similarity">
    <text evidence="1">Belongs to the universal ribosomal protein uS8 family.</text>
</comment>